<organism>
    <name type="scientific">Lactococcus lactis subsp. cremoris (strain MG1363)</name>
    <dbReference type="NCBI Taxonomy" id="416870"/>
    <lineage>
        <taxon>Bacteria</taxon>
        <taxon>Bacillati</taxon>
        <taxon>Bacillota</taxon>
        <taxon>Bacilli</taxon>
        <taxon>Lactobacillales</taxon>
        <taxon>Streptococcaceae</taxon>
        <taxon>Lactococcus</taxon>
        <taxon>Lactococcus cremoris subsp. cremoris</taxon>
    </lineage>
</organism>
<comment type="function">
    <text evidence="1">Catalyzes the attachment of proline to tRNA(Pro) in a two-step reaction: proline is first activated by ATP to form Pro-AMP and then transferred to the acceptor end of tRNA(Pro). As ProRS can inadvertently accommodate and process non-cognate amino acids such as alanine and cysteine, to avoid such errors it has two additional distinct editing activities against alanine. One activity is designated as 'pretransfer' editing and involves the tRNA(Pro)-independent hydrolysis of activated Ala-AMP. The other activity is designated 'posttransfer' editing and involves deacylation of mischarged Ala-tRNA(Pro). The misacylated Cys-tRNA(Pro) is not edited by ProRS.</text>
</comment>
<comment type="catalytic activity">
    <reaction evidence="1">
        <text>tRNA(Pro) + L-proline + ATP = L-prolyl-tRNA(Pro) + AMP + diphosphate</text>
        <dbReference type="Rhea" id="RHEA:14305"/>
        <dbReference type="Rhea" id="RHEA-COMP:9700"/>
        <dbReference type="Rhea" id="RHEA-COMP:9702"/>
        <dbReference type="ChEBI" id="CHEBI:30616"/>
        <dbReference type="ChEBI" id="CHEBI:33019"/>
        <dbReference type="ChEBI" id="CHEBI:60039"/>
        <dbReference type="ChEBI" id="CHEBI:78442"/>
        <dbReference type="ChEBI" id="CHEBI:78532"/>
        <dbReference type="ChEBI" id="CHEBI:456215"/>
        <dbReference type="EC" id="6.1.1.15"/>
    </reaction>
</comment>
<comment type="subunit">
    <text evidence="1">Homodimer.</text>
</comment>
<comment type="subcellular location">
    <subcellularLocation>
        <location evidence="1">Cytoplasm</location>
    </subcellularLocation>
</comment>
<comment type="domain">
    <text evidence="1">Consists of three domains: the N-terminal catalytic domain, the editing domain and the C-terminal anticodon-binding domain.</text>
</comment>
<comment type="similarity">
    <text evidence="1">Belongs to the class-II aminoacyl-tRNA synthetase family. ProS type 1 subfamily.</text>
</comment>
<name>SYP_LACLM</name>
<proteinExistence type="inferred from homology"/>
<sequence>MKQSKMLIPTLREMPSDAQVISHALLMRAGYVRQVSAGIYAYLPLANRVLEKLKNIMREEFDEIGAVELLAPSLLTADLWRESGRYETYGEDLYKLKNRDSSDFILGPTHEETMTSLVRDEITSYKKLPLNVYQIATKFRDEKRPRYGLLRGREFLMKDGYSYHADQDSLDETYLDYKKAYEKIFERAGLNFKPIIADAGAMGGKDSQEFIAITDDRINLEKWLVLSKNITSIDEIPESVLSEIQEELGKWLVAGEDTIVYAEGGDYAANIEMATSQFEPNVAYTEELELEKVATPGAKTIDEVSDFLEIDEEQTVKTLVYHADDELIVILLNGNDQLNEVKLTNHLGASFIEAASEAEVEEKFGAHFGSLGPIGLENVRIIADRKVELIKNAVVGANVDGYHYKNANFGRDFEVEEFVDLRTVNEGEISPDGRGTLKFARGIEIGHIFKLGTRYTEAMNANILDANGRSIPMLMGCYGIGVSRLLSAILEQFARIYVEKTPREEFKFSWSINFPKELAPFDIHLVPVNVKDEAAMELTSELEEKLRGKGYQVLVDDRNERAGVKFADSDLIGLPVRVTIGKKAAEGIVEVKIRATGEVVEINKDELVNTIEILSK</sequence>
<gene>
    <name evidence="1" type="primary">proS</name>
    <name type="ordered locus">llmg_2412</name>
</gene>
<feature type="chain" id="PRO_0000288339" description="Proline--tRNA ligase">
    <location>
        <begin position="1"/>
        <end position="616"/>
    </location>
</feature>
<protein>
    <recommendedName>
        <fullName evidence="1">Proline--tRNA ligase</fullName>
        <ecNumber evidence="1">6.1.1.15</ecNumber>
    </recommendedName>
    <alternativeName>
        <fullName evidence="1">Prolyl-tRNA synthetase</fullName>
        <shortName evidence="1">ProRS</shortName>
    </alternativeName>
</protein>
<accession>A2RNT2</accession>
<evidence type="ECO:0000255" key="1">
    <source>
        <dbReference type="HAMAP-Rule" id="MF_01569"/>
    </source>
</evidence>
<keyword id="KW-0030">Aminoacyl-tRNA synthetase</keyword>
<keyword id="KW-0067">ATP-binding</keyword>
<keyword id="KW-0963">Cytoplasm</keyword>
<keyword id="KW-0436">Ligase</keyword>
<keyword id="KW-0547">Nucleotide-binding</keyword>
<keyword id="KW-0648">Protein biosynthesis</keyword>
<dbReference type="EC" id="6.1.1.15" evidence="1"/>
<dbReference type="EMBL" id="AM406671">
    <property type="protein sequence ID" value="CAL98976.1"/>
    <property type="molecule type" value="Genomic_DNA"/>
</dbReference>
<dbReference type="RefSeq" id="WP_011836051.1">
    <property type="nucleotide sequence ID" value="NC_009004.1"/>
</dbReference>
<dbReference type="SMR" id="A2RNT2"/>
<dbReference type="STRING" id="416870.llmg_2412"/>
<dbReference type="KEGG" id="llm:llmg_2412"/>
<dbReference type="eggNOG" id="COG0442">
    <property type="taxonomic scope" value="Bacteria"/>
</dbReference>
<dbReference type="HOGENOM" id="CLU_016739_0_0_9"/>
<dbReference type="OrthoDB" id="9809052at2"/>
<dbReference type="PhylomeDB" id="A2RNT2"/>
<dbReference type="Proteomes" id="UP000000364">
    <property type="component" value="Chromosome"/>
</dbReference>
<dbReference type="GO" id="GO:0005829">
    <property type="term" value="C:cytosol"/>
    <property type="evidence" value="ECO:0007669"/>
    <property type="project" value="TreeGrafter"/>
</dbReference>
<dbReference type="GO" id="GO:0002161">
    <property type="term" value="F:aminoacyl-tRNA deacylase activity"/>
    <property type="evidence" value="ECO:0007669"/>
    <property type="project" value="InterPro"/>
</dbReference>
<dbReference type="GO" id="GO:0005524">
    <property type="term" value="F:ATP binding"/>
    <property type="evidence" value="ECO:0007669"/>
    <property type="project" value="UniProtKB-UniRule"/>
</dbReference>
<dbReference type="GO" id="GO:0140096">
    <property type="term" value="F:catalytic activity, acting on a protein"/>
    <property type="evidence" value="ECO:0007669"/>
    <property type="project" value="UniProtKB-ARBA"/>
</dbReference>
<dbReference type="GO" id="GO:0004827">
    <property type="term" value="F:proline-tRNA ligase activity"/>
    <property type="evidence" value="ECO:0007669"/>
    <property type="project" value="UniProtKB-UniRule"/>
</dbReference>
<dbReference type="GO" id="GO:0016740">
    <property type="term" value="F:transferase activity"/>
    <property type="evidence" value="ECO:0007669"/>
    <property type="project" value="UniProtKB-ARBA"/>
</dbReference>
<dbReference type="GO" id="GO:0006433">
    <property type="term" value="P:prolyl-tRNA aminoacylation"/>
    <property type="evidence" value="ECO:0007669"/>
    <property type="project" value="UniProtKB-UniRule"/>
</dbReference>
<dbReference type="CDD" id="cd04334">
    <property type="entry name" value="ProRS-INS"/>
    <property type="match status" value="1"/>
</dbReference>
<dbReference type="CDD" id="cd00861">
    <property type="entry name" value="ProRS_anticodon_short"/>
    <property type="match status" value="1"/>
</dbReference>
<dbReference type="FunFam" id="3.40.50.800:FF:000011">
    <property type="entry name" value="Proline--tRNA ligase"/>
    <property type="match status" value="1"/>
</dbReference>
<dbReference type="Gene3D" id="3.40.50.800">
    <property type="entry name" value="Anticodon-binding domain"/>
    <property type="match status" value="1"/>
</dbReference>
<dbReference type="Gene3D" id="3.30.930.10">
    <property type="entry name" value="Bira Bifunctional Protein, Domain 2"/>
    <property type="match status" value="2"/>
</dbReference>
<dbReference type="Gene3D" id="3.90.960.10">
    <property type="entry name" value="YbaK/aminoacyl-tRNA synthetase-associated domain"/>
    <property type="match status" value="1"/>
</dbReference>
<dbReference type="HAMAP" id="MF_01569">
    <property type="entry name" value="Pro_tRNA_synth_type1"/>
    <property type="match status" value="1"/>
</dbReference>
<dbReference type="InterPro" id="IPR002314">
    <property type="entry name" value="aa-tRNA-synt_IIb"/>
</dbReference>
<dbReference type="InterPro" id="IPR006195">
    <property type="entry name" value="aa-tRNA-synth_II"/>
</dbReference>
<dbReference type="InterPro" id="IPR045864">
    <property type="entry name" value="aa-tRNA-synth_II/BPL/LPL"/>
</dbReference>
<dbReference type="InterPro" id="IPR004154">
    <property type="entry name" value="Anticodon-bd"/>
</dbReference>
<dbReference type="InterPro" id="IPR036621">
    <property type="entry name" value="Anticodon-bd_dom_sf"/>
</dbReference>
<dbReference type="InterPro" id="IPR002316">
    <property type="entry name" value="Pro-tRNA-ligase_IIa"/>
</dbReference>
<dbReference type="InterPro" id="IPR004500">
    <property type="entry name" value="Pro-tRNA-synth_IIa_bac-type"/>
</dbReference>
<dbReference type="InterPro" id="IPR023717">
    <property type="entry name" value="Pro-tRNA-Synthase_IIa_type1"/>
</dbReference>
<dbReference type="InterPro" id="IPR050062">
    <property type="entry name" value="Pro-tRNA_synthetase"/>
</dbReference>
<dbReference type="InterPro" id="IPR044140">
    <property type="entry name" value="ProRS_anticodon_short"/>
</dbReference>
<dbReference type="InterPro" id="IPR036754">
    <property type="entry name" value="YbaK/aa-tRNA-synt-asso_dom_sf"/>
</dbReference>
<dbReference type="InterPro" id="IPR007214">
    <property type="entry name" value="YbaK/aa-tRNA-synth-assoc-dom"/>
</dbReference>
<dbReference type="NCBIfam" id="NF006625">
    <property type="entry name" value="PRK09194.1"/>
    <property type="match status" value="1"/>
</dbReference>
<dbReference type="NCBIfam" id="TIGR00409">
    <property type="entry name" value="proS_fam_II"/>
    <property type="match status" value="2"/>
</dbReference>
<dbReference type="PANTHER" id="PTHR42753">
    <property type="entry name" value="MITOCHONDRIAL RIBOSOME PROTEIN L39/PROLYL-TRNA LIGASE FAMILY MEMBER"/>
    <property type="match status" value="1"/>
</dbReference>
<dbReference type="PANTHER" id="PTHR42753:SF2">
    <property type="entry name" value="PROLINE--TRNA LIGASE"/>
    <property type="match status" value="1"/>
</dbReference>
<dbReference type="Pfam" id="PF03129">
    <property type="entry name" value="HGTP_anticodon"/>
    <property type="match status" value="1"/>
</dbReference>
<dbReference type="Pfam" id="PF00587">
    <property type="entry name" value="tRNA-synt_2b"/>
    <property type="match status" value="1"/>
</dbReference>
<dbReference type="Pfam" id="PF04073">
    <property type="entry name" value="tRNA_edit"/>
    <property type="match status" value="1"/>
</dbReference>
<dbReference type="PRINTS" id="PR01046">
    <property type="entry name" value="TRNASYNTHPRO"/>
</dbReference>
<dbReference type="SUPFAM" id="SSF52954">
    <property type="entry name" value="Class II aaRS ABD-related"/>
    <property type="match status" value="1"/>
</dbReference>
<dbReference type="SUPFAM" id="SSF55681">
    <property type="entry name" value="Class II aaRS and biotin synthetases"/>
    <property type="match status" value="1"/>
</dbReference>
<dbReference type="SUPFAM" id="SSF55826">
    <property type="entry name" value="YbaK/ProRS associated domain"/>
    <property type="match status" value="1"/>
</dbReference>
<dbReference type="PROSITE" id="PS50862">
    <property type="entry name" value="AA_TRNA_LIGASE_II"/>
    <property type="match status" value="1"/>
</dbReference>
<reference key="1">
    <citation type="journal article" date="2007" name="J. Bacteriol.">
        <title>The complete genome sequence of the lactic acid bacterial paradigm Lactococcus lactis subsp. cremoris MG1363.</title>
        <authorList>
            <person name="Wegmann U."/>
            <person name="O'Connell-Motherway M."/>
            <person name="Zomer A."/>
            <person name="Buist G."/>
            <person name="Shearman C."/>
            <person name="Canchaya C."/>
            <person name="Ventura M."/>
            <person name="Goesmann A."/>
            <person name="Gasson M.J."/>
            <person name="Kuipers O.P."/>
            <person name="van Sinderen D."/>
            <person name="Kok J."/>
        </authorList>
    </citation>
    <scope>NUCLEOTIDE SEQUENCE [LARGE SCALE GENOMIC DNA]</scope>
    <source>
        <strain>MG1363</strain>
    </source>
</reference>